<protein>
    <recommendedName>
        <fullName evidence="1">Probable malate:quinone oxidoreductase</fullName>
        <ecNumber evidence="1">1.1.5.4</ecNumber>
    </recommendedName>
    <alternativeName>
        <fullName evidence="1">MQO</fullName>
    </alternativeName>
    <alternativeName>
        <fullName evidence="1">Malate dehydrogenase [quinone]</fullName>
    </alternativeName>
</protein>
<sequence length="512" mass="55188">MSNQNAVETKTDVVLVGAGIMSATLGALLRQLQPDWSISTFERLDAVAAESSDPWNNAGTGHSALCELNYTPENSDGTVDIKKAVNVNEQFQVSRQFWAHAVEQGVLTQPKEFINPIPHVSFVHGEANAKYLRARYDALAGHTLFRGMEYIDDPAEFSERLPLMAKGRDFSDPIALNWSQDGTDVDFGALTKQLIGYIGKTGGKMYFGHEVTNLTQNSDKSWTVKVTNRRTGEKRTVRSRFVFVGAGGGALHLLQKSGIKEAKGFGGFPVSGAFLRCTNPELIDQHSAKVYGKAAVGAPPMSVPHLDTRVIGNKPGLLFGPYAGWSPKFLKQGRVTDLPGSVKPNNILSMLGVGVSELGLVKYLVSELAKNEAGRIWDLREFAPKAQAQDWELITAGQRVQVIRRAKGKGGVLEFGTAVVAAEDGSIAGLLGASPGASTAVPAMLDVLERCFPTEFQGWKGKLREMVPSIGVKLTDNEGLFNQVWDWSSKVLELDSAGASESAPVADTVATV</sequence>
<reference key="1">
    <citation type="submission" date="2005-03" db="EMBL/GenBank/DDBJ databases">
        <title>Comparison of the complete genome sequences of Rhodococcus erythropolis PR4 and Rhodococcus opacus B4.</title>
        <authorList>
            <person name="Takarada H."/>
            <person name="Sekine M."/>
            <person name="Hosoyama A."/>
            <person name="Yamada R."/>
            <person name="Fujisawa T."/>
            <person name="Omata S."/>
            <person name="Shimizu A."/>
            <person name="Tsukatani N."/>
            <person name="Tanikawa S."/>
            <person name="Fujita N."/>
            <person name="Harayama S."/>
        </authorList>
    </citation>
    <scope>NUCLEOTIDE SEQUENCE [LARGE SCALE GENOMIC DNA]</scope>
    <source>
        <strain>PR4 / NBRC 100887</strain>
    </source>
</reference>
<organism>
    <name type="scientific">Rhodococcus erythropolis (strain PR4 / NBRC 100887)</name>
    <dbReference type="NCBI Taxonomy" id="234621"/>
    <lineage>
        <taxon>Bacteria</taxon>
        <taxon>Bacillati</taxon>
        <taxon>Actinomycetota</taxon>
        <taxon>Actinomycetes</taxon>
        <taxon>Mycobacteriales</taxon>
        <taxon>Nocardiaceae</taxon>
        <taxon>Rhodococcus</taxon>
        <taxon>Rhodococcus erythropolis group</taxon>
    </lineage>
</organism>
<feature type="chain" id="PRO_1000204203" description="Probable malate:quinone oxidoreductase">
    <location>
        <begin position="1"/>
        <end position="512"/>
    </location>
</feature>
<dbReference type="EC" id="1.1.5.4" evidence="1"/>
<dbReference type="EMBL" id="AP008957">
    <property type="protein sequence ID" value="BAH33312.1"/>
    <property type="molecule type" value="Genomic_DNA"/>
</dbReference>
<dbReference type="SMR" id="C0ZY77"/>
<dbReference type="KEGG" id="rer:RER_26040"/>
<dbReference type="eggNOG" id="COG0579">
    <property type="taxonomic scope" value="Bacteria"/>
</dbReference>
<dbReference type="HOGENOM" id="CLU_028151_0_0_11"/>
<dbReference type="UniPathway" id="UPA00223">
    <property type="reaction ID" value="UER01008"/>
</dbReference>
<dbReference type="Proteomes" id="UP000002204">
    <property type="component" value="Chromosome"/>
</dbReference>
<dbReference type="GO" id="GO:0047545">
    <property type="term" value="F:2-hydroxyglutarate dehydrogenase activity"/>
    <property type="evidence" value="ECO:0007669"/>
    <property type="project" value="TreeGrafter"/>
</dbReference>
<dbReference type="GO" id="GO:0008924">
    <property type="term" value="F:L-malate dehydrogenase (quinone) activity"/>
    <property type="evidence" value="ECO:0007669"/>
    <property type="project" value="UniProtKB-UniRule"/>
</dbReference>
<dbReference type="GO" id="GO:0006099">
    <property type="term" value="P:tricarboxylic acid cycle"/>
    <property type="evidence" value="ECO:0007669"/>
    <property type="project" value="UniProtKB-UniRule"/>
</dbReference>
<dbReference type="Gene3D" id="3.30.9.10">
    <property type="entry name" value="D-Amino Acid Oxidase, subunit A, domain 2"/>
    <property type="match status" value="1"/>
</dbReference>
<dbReference type="Gene3D" id="3.50.50.60">
    <property type="entry name" value="FAD/NAD(P)-binding domain"/>
    <property type="match status" value="1"/>
</dbReference>
<dbReference type="HAMAP" id="MF_00212">
    <property type="entry name" value="MQO"/>
    <property type="match status" value="1"/>
</dbReference>
<dbReference type="InterPro" id="IPR036188">
    <property type="entry name" value="FAD/NAD-bd_sf"/>
</dbReference>
<dbReference type="InterPro" id="IPR006231">
    <property type="entry name" value="MQO"/>
</dbReference>
<dbReference type="NCBIfam" id="TIGR01320">
    <property type="entry name" value="mal_quin_oxido"/>
    <property type="match status" value="1"/>
</dbReference>
<dbReference type="NCBIfam" id="NF003603">
    <property type="entry name" value="PRK05257.1-1"/>
    <property type="match status" value="1"/>
</dbReference>
<dbReference type="NCBIfam" id="NF003605">
    <property type="entry name" value="PRK05257.1-4"/>
    <property type="match status" value="1"/>
</dbReference>
<dbReference type="NCBIfam" id="NF003606">
    <property type="entry name" value="PRK05257.2-1"/>
    <property type="match status" value="1"/>
</dbReference>
<dbReference type="NCBIfam" id="NF003610">
    <property type="entry name" value="PRK05257.3-1"/>
    <property type="match status" value="1"/>
</dbReference>
<dbReference type="NCBIfam" id="NF003611">
    <property type="entry name" value="PRK05257.3-2"/>
    <property type="match status" value="1"/>
</dbReference>
<dbReference type="NCBIfam" id="NF009875">
    <property type="entry name" value="PRK13339.1"/>
    <property type="match status" value="1"/>
</dbReference>
<dbReference type="PANTHER" id="PTHR43104">
    <property type="entry name" value="L-2-HYDROXYGLUTARATE DEHYDROGENASE, MITOCHONDRIAL"/>
    <property type="match status" value="1"/>
</dbReference>
<dbReference type="PANTHER" id="PTHR43104:SF2">
    <property type="entry name" value="L-2-HYDROXYGLUTARATE DEHYDROGENASE, MITOCHONDRIAL"/>
    <property type="match status" value="1"/>
</dbReference>
<dbReference type="Pfam" id="PF06039">
    <property type="entry name" value="Mqo"/>
    <property type="match status" value="1"/>
</dbReference>
<dbReference type="SUPFAM" id="SSF51905">
    <property type="entry name" value="FAD/NAD(P)-binding domain"/>
    <property type="match status" value="1"/>
</dbReference>
<proteinExistence type="inferred from homology"/>
<gene>
    <name evidence="1" type="primary">mqo</name>
    <name type="ordered locus">RER_26040</name>
</gene>
<name>MQO_RHOE4</name>
<comment type="catalytic activity">
    <reaction evidence="1">
        <text>(S)-malate + a quinone = a quinol + oxaloacetate</text>
        <dbReference type="Rhea" id="RHEA:46012"/>
        <dbReference type="ChEBI" id="CHEBI:15589"/>
        <dbReference type="ChEBI" id="CHEBI:16452"/>
        <dbReference type="ChEBI" id="CHEBI:24646"/>
        <dbReference type="ChEBI" id="CHEBI:132124"/>
        <dbReference type="EC" id="1.1.5.4"/>
    </reaction>
</comment>
<comment type="cofactor">
    <cofactor evidence="1">
        <name>FAD</name>
        <dbReference type="ChEBI" id="CHEBI:57692"/>
    </cofactor>
</comment>
<comment type="pathway">
    <text evidence="1">Carbohydrate metabolism; tricarboxylic acid cycle; oxaloacetate from (S)-malate (quinone route): step 1/1.</text>
</comment>
<comment type="similarity">
    <text evidence="1">Belongs to the MQO family.</text>
</comment>
<evidence type="ECO:0000255" key="1">
    <source>
        <dbReference type="HAMAP-Rule" id="MF_00212"/>
    </source>
</evidence>
<accession>C0ZY77</accession>
<keyword id="KW-0274">FAD</keyword>
<keyword id="KW-0285">Flavoprotein</keyword>
<keyword id="KW-0560">Oxidoreductase</keyword>
<keyword id="KW-0816">Tricarboxylic acid cycle</keyword>